<protein>
    <recommendedName>
        <fullName evidence="1">Ion-translocating oxidoreductase complex subunit E</fullName>
        <ecNumber evidence="1">7.-.-.-</ecNumber>
    </recommendedName>
    <alternativeName>
        <fullName evidence="1">Rsx electron transport complex subunit E</fullName>
    </alternativeName>
</protein>
<keyword id="KW-0997">Cell inner membrane</keyword>
<keyword id="KW-1003">Cell membrane</keyword>
<keyword id="KW-0249">Electron transport</keyword>
<keyword id="KW-0472">Membrane</keyword>
<keyword id="KW-1278">Translocase</keyword>
<keyword id="KW-0812">Transmembrane</keyword>
<keyword id="KW-1133">Transmembrane helix</keyword>
<keyword id="KW-0813">Transport</keyword>
<comment type="function">
    <text evidence="1">Part of a membrane-bound complex that couples electron transfer with translocation of ions across the membrane. Required to maintain the reduced state of SoxR.</text>
</comment>
<comment type="subunit">
    <text evidence="1">The complex is composed of six subunits: RsxA, RsxB, RsxC, RsxD, RsxE and RsxG.</text>
</comment>
<comment type="subcellular location">
    <subcellularLocation>
        <location evidence="1">Cell inner membrane</location>
        <topology evidence="1">Multi-pass membrane protein</topology>
    </subcellularLocation>
</comment>
<comment type="similarity">
    <text evidence="1">Belongs to the NqrDE/RnfAE family.</text>
</comment>
<organism>
    <name type="scientific">Escherichia coli O8 (strain IAI1)</name>
    <dbReference type="NCBI Taxonomy" id="585034"/>
    <lineage>
        <taxon>Bacteria</taxon>
        <taxon>Pseudomonadati</taxon>
        <taxon>Pseudomonadota</taxon>
        <taxon>Gammaproteobacteria</taxon>
        <taxon>Enterobacterales</taxon>
        <taxon>Enterobacteriaceae</taxon>
        <taxon>Escherichia</taxon>
    </lineage>
</organism>
<evidence type="ECO:0000255" key="1">
    <source>
        <dbReference type="HAMAP-Rule" id="MF_00478"/>
    </source>
</evidence>
<accession>B7M0I9</accession>
<name>RSXE_ECO8A</name>
<reference key="1">
    <citation type="journal article" date="2009" name="PLoS Genet.">
        <title>Organised genome dynamics in the Escherichia coli species results in highly diverse adaptive paths.</title>
        <authorList>
            <person name="Touchon M."/>
            <person name="Hoede C."/>
            <person name="Tenaillon O."/>
            <person name="Barbe V."/>
            <person name="Baeriswyl S."/>
            <person name="Bidet P."/>
            <person name="Bingen E."/>
            <person name="Bonacorsi S."/>
            <person name="Bouchier C."/>
            <person name="Bouvet O."/>
            <person name="Calteau A."/>
            <person name="Chiapello H."/>
            <person name="Clermont O."/>
            <person name="Cruveiller S."/>
            <person name="Danchin A."/>
            <person name="Diard M."/>
            <person name="Dossat C."/>
            <person name="Karoui M.E."/>
            <person name="Frapy E."/>
            <person name="Garry L."/>
            <person name="Ghigo J.M."/>
            <person name="Gilles A.M."/>
            <person name="Johnson J."/>
            <person name="Le Bouguenec C."/>
            <person name="Lescat M."/>
            <person name="Mangenot S."/>
            <person name="Martinez-Jehanne V."/>
            <person name="Matic I."/>
            <person name="Nassif X."/>
            <person name="Oztas S."/>
            <person name="Petit M.A."/>
            <person name="Pichon C."/>
            <person name="Rouy Z."/>
            <person name="Ruf C.S."/>
            <person name="Schneider D."/>
            <person name="Tourret J."/>
            <person name="Vacherie B."/>
            <person name="Vallenet D."/>
            <person name="Medigue C."/>
            <person name="Rocha E.P.C."/>
            <person name="Denamur E."/>
        </authorList>
    </citation>
    <scope>NUCLEOTIDE SEQUENCE [LARGE SCALE GENOMIC DNA]</scope>
    <source>
        <strain>IAI1</strain>
    </source>
</reference>
<proteinExistence type="inferred from homology"/>
<dbReference type="EC" id="7.-.-.-" evidence="1"/>
<dbReference type="EMBL" id="CU928160">
    <property type="protein sequence ID" value="CAQ98541.1"/>
    <property type="molecule type" value="Genomic_DNA"/>
</dbReference>
<dbReference type="RefSeq" id="WP_001289654.1">
    <property type="nucleotide sequence ID" value="NC_011741.1"/>
</dbReference>
<dbReference type="SMR" id="B7M0I9"/>
<dbReference type="KEGG" id="ecr:ECIAI1_1684"/>
<dbReference type="HOGENOM" id="CLU_046659_1_0_6"/>
<dbReference type="GO" id="GO:0005886">
    <property type="term" value="C:plasma membrane"/>
    <property type="evidence" value="ECO:0007669"/>
    <property type="project" value="UniProtKB-SubCell"/>
</dbReference>
<dbReference type="GO" id="GO:0022900">
    <property type="term" value="P:electron transport chain"/>
    <property type="evidence" value="ECO:0007669"/>
    <property type="project" value="UniProtKB-UniRule"/>
</dbReference>
<dbReference type="HAMAP" id="MF_00478">
    <property type="entry name" value="RsxE_RnfE"/>
    <property type="match status" value="1"/>
</dbReference>
<dbReference type="InterPro" id="IPR003667">
    <property type="entry name" value="NqrDE/RnfAE"/>
</dbReference>
<dbReference type="InterPro" id="IPR010968">
    <property type="entry name" value="RnfE"/>
</dbReference>
<dbReference type="NCBIfam" id="NF009070">
    <property type="entry name" value="PRK12405.1"/>
    <property type="match status" value="1"/>
</dbReference>
<dbReference type="NCBIfam" id="TIGR01948">
    <property type="entry name" value="rnfE"/>
    <property type="match status" value="1"/>
</dbReference>
<dbReference type="PANTHER" id="PTHR30586">
    <property type="entry name" value="ELECTRON TRANSPORT COMPLEX PROTEIN RNFE"/>
    <property type="match status" value="1"/>
</dbReference>
<dbReference type="PANTHER" id="PTHR30586:SF0">
    <property type="entry name" value="ION-TRANSLOCATING OXIDOREDUCTASE COMPLEX SUBUNIT E"/>
    <property type="match status" value="1"/>
</dbReference>
<dbReference type="Pfam" id="PF02508">
    <property type="entry name" value="Rnf-Nqr"/>
    <property type="match status" value="1"/>
</dbReference>
<dbReference type="PIRSF" id="PIRSF006102">
    <property type="entry name" value="NQR_DE"/>
    <property type="match status" value="1"/>
</dbReference>
<sequence length="231" mass="24489">MSEIKDVIVQGLWKNNSALVQLLGLCPLLAVTSTATNALGLGLATTLVLTLTNLTISTLRHWTPAEIRIPIYVMIIASVVSAVQMLINAYAFGLYQSLGIFIPLIVTNCIVVGRAEAFAAKKGPALSALDGFSIGMGATCAMFVLGSLREIIGNGTLFDGADALLGSWAKVLRVEIFHTDSPFLLAMLPPGAFIGLGLMLAGKYLIDERMKKRRAEATAERALPNGETGNV</sequence>
<feature type="chain" id="PRO_1000125849" description="Ion-translocating oxidoreductase complex subunit E">
    <location>
        <begin position="1"/>
        <end position="231"/>
    </location>
</feature>
<feature type="transmembrane region" description="Helical" evidence="1">
    <location>
        <begin position="18"/>
        <end position="38"/>
    </location>
</feature>
<feature type="transmembrane region" description="Helical" evidence="1">
    <location>
        <begin position="39"/>
        <end position="59"/>
    </location>
</feature>
<feature type="transmembrane region" description="Helical" evidence="1">
    <location>
        <begin position="63"/>
        <end position="83"/>
    </location>
</feature>
<feature type="transmembrane region" description="Helical" evidence="1">
    <location>
        <begin position="86"/>
        <end position="106"/>
    </location>
</feature>
<feature type="transmembrane region" description="Helical" evidence="1">
    <location>
        <begin position="125"/>
        <end position="145"/>
    </location>
</feature>
<feature type="transmembrane region" description="Helical" evidence="1">
    <location>
        <begin position="182"/>
        <end position="202"/>
    </location>
</feature>
<gene>
    <name evidence="1" type="primary">rsxE</name>
    <name type="ordered locus">ECIAI1_1684</name>
</gene>